<protein>
    <recommendedName>
        <fullName evidence="7">Meiotic driver wtf23</fullName>
    </recommendedName>
</protein>
<evidence type="ECO:0000250" key="1">
    <source>
        <dbReference type="UniProtKB" id="A0A218N034"/>
    </source>
</evidence>
<evidence type="ECO:0000250" key="2">
    <source>
        <dbReference type="UniProtKB" id="A0A218N035"/>
    </source>
</evidence>
<evidence type="ECO:0000250" key="3">
    <source>
        <dbReference type="UniProtKB" id="O74420"/>
    </source>
</evidence>
<evidence type="ECO:0000255" key="4"/>
<evidence type="ECO:0000256" key="5">
    <source>
        <dbReference type="SAM" id="MobiDB-lite"/>
    </source>
</evidence>
<evidence type="ECO:0000305" key="6"/>
<evidence type="ECO:0000312" key="7">
    <source>
        <dbReference type="PomBase" id="SPCC1620.02"/>
    </source>
</evidence>
<accession>O94409</accession>
<feature type="chain" id="PRO_0000193234" description="Meiotic driver wtf23">
    <location>
        <begin position="1"/>
        <end position="368"/>
    </location>
</feature>
<feature type="transmembrane region" description="Helical" evidence="4">
    <location>
        <begin position="105"/>
        <end position="124"/>
    </location>
</feature>
<feature type="transmembrane region" description="Helical" evidence="4">
    <location>
        <begin position="139"/>
        <end position="158"/>
    </location>
</feature>
<feature type="transmembrane region" description="Helical" evidence="4">
    <location>
        <begin position="170"/>
        <end position="192"/>
    </location>
</feature>
<feature type="transmembrane region" description="Helical" evidence="4">
    <location>
        <begin position="202"/>
        <end position="221"/>
    </location>
</feature>
<feature type="transmembrane region" description="Helical" evidence="4">
    <location>
        <begin position="234"/>
        <end position="256"/>
    </location>
</feature>
<feature type="transmembrane region" description="Helical" evidence="4">
    <location>
        <begin position="266"/>
        <end position="283"/>
    </location>
</feature>
<feature type="transmembrane region" description="Helical" evidence="4">
    <location>
        <begin position="328"/>
        <end position="350"/>
    </location>
</feature>
<feature type="region of interest" description="Disordered" evidence="5">
    <location>
        <begin position="1"/>
        <end position="98"/>
    </location>
</feature>
<feature type="compositionally biased region" description="Basic and acidic residues" evidence="5">
    <location>
        <begin position="11"/>
        <end position="29"/>
    </location>
</feature>
<feature type="compositionally biased region" description="Polar residues" evidence="5">
    <location>
        <begin position="57"/>
        <end position="72"/>
    </location>
</feature>
<feature type="compositionally biased region" description="Polar residues" evidence="5">
    <location>
        <begin position="89"/>
        <end position="98"/>
    </location>
</feature>
<feature type="splice variant" id="VSP_060945" description="In isoform 2." evidence="2">
    <location>
        <begin position="1"/>
        <end position="55"/>
    </location>
</feature>
<proteinExistence type="inferred from homology"/>
<dbReference type="EMBL" id="CU329672">
    <property type="protein sequence ID" value="CAA22486.1"/>
    <property type="molecule type" value="Genomic_DNA"/>
</dbReference>
<dbReference type="PIR" id="T41032">
    <property type="entry name" value="T41032"/>
</dbReference>
<dbReference type="RefSeq" id="NP_588460.1">
    <property type="nucleotide sequence ID" value="NM_001023451.2"/>
</dbReference>
<dbReference type="SMR" id="O94409"/>
<dbReference type="BioGRID" id="275737">
    <property type="interactions" value="1"/>
</dbReference>
<dbReference type="STRING" id="284812.O94409"/>
<dbReference type="iPTMnet" id="O94409"/>
<dbReference type="PaxDb" id="4896-SPCC1620.02.1"/>
<dbReference type="EnsemblFungi" id="SPCC1620.02.1">
    <molecule id="O94409-1"/>
    <property type="protein sequence ID" value="SPCC1620.02.1:pep"/>
    <property type="gene ID" value="SPCC1620.02"/>
</dbReference>
<dbReference type="GeneID" id="2539166"/>
<dbReference type="KEGG" id="spo:2539166"/>
<dbReference type="PomBase" id="SPCC1620.02">
    <property type="gene designation" value="wtf23"/>
</dbReference>
<dbReference type="VEuPathDB" id="FungiDB:SPCC1620.02"/>
<dbReference type="HOGENOM" id="CLU_763247_0_0_1"/>
<dbReference type="InParanoid" id="O94409"/>
<dbReference type="PhylomeDB" id="O94409"/>
<dbReference type="PRO" id="PR:O94409"/>
<dbReference type="Proteomes" id="UP000002485">
    <property type="component" value="Chromosome III"/>
</dbReference>
<dbReference type="GO" id="GO:0072324">
    <property type="term" value="C:ascus epiplasm"/>
    <property type="evidence" value="ECO:0007669"/>
    <property type="project" value="UniProtKB-SubCell"/>
</dbReference>
<dbReference type="GO" id="GO:0005789">
    <property type="term" value="C:endoplasmic reticulum membrane"/>
    <property type="evidence" value="ECO:0007669"/>
    <property type="project" value="UniProtKB-SubCell"/>
</dbReference>
<dbReference type="GO" id="GO:0005794">
    <property type="term" value="C:Golgi apparatus"/>
    <property type="evidence" value="ECO:0007005"/>
    <property type="project" value="PomBase"/>
</dbReference>
<dbReference type="GO" id="GO:0005774">
    <property type="term" value="C:vacuolar membrane"/>
    <property type="evidence" value="ECO:0007669"/>
    <property type="project" value="UniProtKB-SubCell"/>
</dbReference>
<dbReference type="GO" id="GO:0110134">
    <property type="term" value="P:meiotic drive"/>
    <property type="evidence" value="ECO:0000255"/>
    <property type="project" value="PomBase"/>
</dbReference>
<dbReference type="InterPro" id="IPR004982">
    <property type="entry name" value="WTF"/>
</dbReference>
<dbReference type="Pfam" id="PF03303">
    <property type="entry name" value="WTF"/>
    <property type="match status" value="2"/>
</dbReference>
<comment type="function">
    <text evidence="1">Promotes unequal transmission of alleles from the parental zygote to progeny spores by acting as poison/antidote system where the poison and antidote proteins are produced from the same locus; the poison component is trans-acting and targets all spores within an ascus whereas the antidote component is spore-specific, leading to poisoning of all progeny that do not inherit the allele.</text>
</comment>
<comment type="function">
    <molecule>Isoform 1</molecule>
    <text evidence="1">Localizes isoform 2 to the vacuole thereby facilitating its degradation.</text>
</comment>
<comment type="function">
    <molecule>Isoform 2</molecule>
    <text evidence="1">Forms toxic aggregates that disrupt spore maturation.</text>
</comment>
<comment type="subunit">
    <text evidence="1 3">Homomer (By similarity). Forms protein aggregates (By similarity). The two isoforms can interact with each other and with themselves (By similarity). High sequence similarity is required for their interaction (By similarity).</text>
</comment>
<comment type="subcellular location">
    <molecule>Isoform 1</molecule>
    <subcellularLocation>
        <location evidence="1 4">Spore membrane</location>
        <topology evidence="4">Multi-pass membrane protein</topology>
    </subcellularLocation>
    <subcellularLocation>
        <location evidence="1 4">Vacuole membrane</location>
        <topology evidence="4">Multi-pass membrane protein</topology>
    </subcellularLocation>
    <text evidence="1">Contained within spores expressing the isoform and localizes isoform 2 to the vacuole.</text>
</comment>
<comment type="subcellular location">
    <molecule>Isoform 2</molecule>
    <subcellularLocation>
        <location evidence="1">Ascus epiplasm</location>
    </subcellularLocation>
    <subcellularLocation>
        <location evidence="1">Cytoplasm</location>
    </subcellularLocation>
    <subcellularLocation>
        <location evidence="1 4">Spore membrane</location>
        <topology evidence="4">Multi-pass membrane protein</topology>
    </subcellularLocation>
    <subcellularLocation>
        <location evidence="1 4">Vacuole membrane</location>
        <topology evidence="4">Multi-pass membrane protein</topology>
    </subcellularLocation>
    <subcellularLocation>
        <location evidence="1 4">Endoplasmic reticulum membrane</location>
        <topology evidence="4">Multi-pass membrane protein</topology>
    </subcellularLocation>
    <text evidence="1">Localizes in trans to all spores within an ascus. Localization to the spore vacuole is dependent on isoform 1.</text>
</comment>
<comment type="alternative products">
    <event type="alternative initiation"/>
    <isoform>
        <id>O94409-1</id>
        <name>1</name>
        <name evidence="6">Antidote</name>
        <name evidence="6">suppressor</name>
        <sequence type="displayed"/>
    </isoform>
    <isoform>
        <id>O94409-2</id>
        <name>2</name>
        <name evidence="6">Poison</name>
        <sequence type="described" ref="VSP_060945"/>
    </isoform>
</comment>
<comment type="similarity">
    <text evidence="6">Belongs to the WTF family.</text>
</comment>
<keyword id="KW-0024">Alternative initiation</keyword>
<keyword id="KW-0963">Cytoplasm</keyword>
<keyword id="KW-0256">Endoplasmic reticulum</keyword>
<keyword id="KW-0472">Membrane</keyword>
<keyword id="KW-1185">Reference proteome</keyword>
<keyword id="KW-0800">Toxin</keyword>
<keyword id="KW-0812">Transmembrane</keyword>
<keyword id="KW-1133">Transmembrane helix</keyword>
<keyword id="KW-0926">Vacuole</keyword>
<sequence length="368" mass="41197">MKNKYYPLRSSMDELSAKNDNEIDLEKGPLPEYNSEDGSTLPPYSENINLKDPKQMGANNPNLFNTDESTTPPDYGEDSLSITHRENHSSGTADNSSTSPLKKAFLSFISIFVLNVPAVCYLTYKDALFKDYGKDEWVYFGVWCAICLMIFISLWYFYETWIKAVKVTVIFLAQCIKVTVVFLAQCVKVISIGLFNIRREMMIIIWLLWLIICCILFGCVKSGDLNLNKALIYSTCTISAVLLLIVSSVCIPFWTFERTLAKLAKVFLLQSGIVLVLNGTMFLRGKHFEWTGCEIEASVLFIMGNVLFLCEMECPGALIRTRNSIRNGIAFILGGIGNAMMGLANAFRGGNDNNNNIPLGEMDVEGEV</sequence>
<reference key="1">
    <citation type="journal article" date="2002" name="Nature">
        <title>The genome sequence of Schizosaccharomyces pombe.</title>
        <authorList>
            <person name="Wood V."/>
            <person name="Gwilliam R."/>
            <person name="Rajandream M.A."/>
            <person name="Lyne M.H."/>
            <person name="Lyne R."/>
            <person name="Stewart A."/>
            <person name="Sgouros J.G."/>
            <person name="Peat N."/>
            <person name="Hayles J."/>
            <person name="Baker S.G."/>
            <person name="Basham D."/>
            <person name="Bowman S."/>
            <person name="Brooks K."/>
            <person name="Brown D."/>
            <person name="Brown S."/>
            <person name="Chillingworth T."/>
            <person name="Churcher C.M."/>
            <person name="Collins M."/>
            <person name="Connor R."/>
            <person name="Cronin A."/>
            <person name="Davis P."/>
            <person name="Feltwell T."/>
            <person name="Fraser A."/>
            <person name="Gentles S."/>
            <person name="Goble A."/>
            <person name="Hamlin N."/>
            <person name="Harris D.E."/>
            <person name="Hidalgo J."/>
            <person name="Hodgson G."/>
            <person name="Holroyd S."/>
            <person name="Hornsby T."/>
            <person name="Howarth S."/>
            <person name="Huckle E.J."/>
            <person name="Hunt S."/>
            <person name="Jagels K."/>
            <person name="James K.D."/>
            <person name="Jones L."/>
            <person name="Jones M."/>
            <person name="Leather S."/>
            <person name="McDonald S."/>
            <person name="McLean J."/>
            <person name="Mooney P."/>
            <person name="Moule S."/>
            <person name="Mungall K.L."/>
            <person name="Murphy L.D."/>
            <person name="Niblett D."/>
            <person name="Odell C."/>
            <person name="Oliver K."/>
            <person name="O'Neil S."/>
            <person name="Pearson D."/>
            <person name="Quail M.A."/>
            <person name="Rabbinowitsch E."/>
            <person name="Rutherford K.M."/>
            <person name="Rutter S."/>
            <person name="Saunders D."/>
            <person name="Seeger K."/>
            <person name="Sharp S."/>
            <person name="Skelton J."/>
            <person name="Simmonds M.N."/>
            <person name="Squares R."/>
            <person name="Squares S."/>
            <person name="Stevens K."/>
            <person name="Taylor K."/>
            <person name="Taylor R.G."/>
            <person name="Tivey A."/>
            <person name="Walsh S.V."/>
            <person name="Warren T."/>
            <person name="Whitehead S."/>
            <person name="Woodward J.R."/>
            <person name="Volckaert G."/>
            <person name="Aert R."/>
            <person name="Robben J."/>
            <person name="Grymonprez B."/>
            <person name="Weltjens I."/>
            <person name="Vanstreels E."/>
            <person name="Rieger M."/>
            <person name="Schaefer M."/>
            <person name="Mueller-Auer S."/>
            <person name="Gabel C."/>
            <person name="Fuchs M."/>
            <person name="Duesterhoeft A."/>
            <person name="Fritzc C."/>
            <person name="Holzer E."/>
            <person name="Moestl D."/>
            <person name="Hilbert H."/>
            <person name="Borzym K."/>
            <person name="Langer I."/>
            <person name="Beck A."/>
            <person name="Lehrach H."/>
            <person name="Reinhardt R."/>
            <person name="Pohl T.M."/>
            <person name="Eger P."/>
            <person name="Zimmermann W."/>
            <person name="Wedler H."/>
            <person name="Wambutt R."/>
            <person name="Purnelle B."/>
            <person name="Goffeau A."/>
            <person name="Cadieu E."/>
            <person name="Dreano S."/>
            <person name="Gloux S."/>
            <person name="Lelaure V."/>
            <person name="Mottier S."/>
            <person name="Galibert F."/>
            <person name="Aves S.J."/>
            <person name="Xiang Z."/>
            <person name="Hunt C."/>
            <person name="Moore K."/>
            <person name="Hurst S.M."/>
            <person name="Lucas M."/>
            <person name="Rochet M."/>
            <person name="Gaillardin C."/>
            <person name="Tallada V.A."/>
            <person name="Garzon A."/>
            <person name="Thode G."/>
            <person name="Daga R.R."/>
            <person name="Cruzado L."/>
            <person name="Jimenez J."/>
            <person name="Sanchez M."/>
            <person name="del Rey F."/>
            <person name="Benito J."/>
            <person name="Dominguez A."/>
            <person name="Revuelta J.L."/>
            <person name="Moreno S."/>
            <person name="Armstrong J."/>
            <person name="Forsburg S.L."/>
            <person name="Cerutti L."/>
            <person name="Lowe T."/>
            <person name="McCombie W.R."/>
            <person name="Paulsen I."/>
            <person name="Potashkin J."/>
            <person name="Shpakovski G.V."/>
            <person name="Ussery D."/>
            <person name="Barrell B.G."/>
            <person name="Nurse P."/>
        </authorList>
    </citation>
    <scope>NUCLEOTIDE SEQUENCE [LARGE SCALE GENOMIC DNA]</scope>
    <source>
        <strain>972 / ATCC 24843</strain>
    </source>
</reference>
<reference key="2">
    <citation type="journal article" date="2019" name="Mol. Biol. Evol.">
        <title>Killer meiotic drive and dynamic evolution of the wtf gene family.</title>
        <authorList>
            <person name="Eickbush M.T."/>
            <person name="Young J.M."/>
            <person name="Zanders S.E."/>
        </authorList>
    </citation>
    <scope>ALTERNATIVE INITIATION (ISOFORMS 1 AND 2)</scope>
</reference>
<gene>
    <name evidence="7" type="primary">wtf23</name>
    <name type="synonym">wtf10</name>
    <name evidence="7" type="ORF">SPCC1620.02</name>
</gene>
<name>WTF23_SCHPO</name>
<organism>
    <name type="scientific">Schizosaccharomyces pombe (strain 972 / ATCC 24843)</name>
    <name type="common">Fission yeast</name>
    <dbReference type="NCBI Taxonomy" id="284812"/>
    <lineage>
        <taxon>Eukaryota</taxon>
        <taxon>Fungi</taxon>
        <taxon>Dikarya</taxon>
        <taxon>Ascomycota</taxon>
        <taxon>Taphrinomycotina</taxon>
        <taxon>Schizosaccharomycetes</taxon>
        <taxon>Schizosaccharomycetales</taxon>
        <taxon>Schizosaccharomycetaceae</taxon>
        <taxon>Schizosaccharomyces</taxon>
    </lineage>
</organism>